<sequence length="240" mass="27049">MKTNKLINKSFRFKQFSIEEGTCGMPISTDGVLLGSWAFSLSPTTILDIGCGTGLLSLMCAQRFPHAHITALDIEQTAYLAAEHNRQQSPWAERIECQHADILHWQPSKRFAAIICNPPYFNSGETAQHQVRATARHTISLQHQALIERLPQLLEPDGVASFILPKAEGEDFIALARQAGLFVGRYCQVQPTTDKPVHRLLFELHLSPCLPVETRLVIREQQGYSEAFCQLTRDFYLKMS</sequence>
<protein>
    <recommendedName>
        <fullName evidence="1">tRNA1(Val) (adenine(37)-N6)-methyltransferase</fullName>
        <ecNumber evidence="1">2.1.1.223</ecNumber>
    </recommendedName>
    <alternativeName>
        <fullName evidence="1">tRNA m6A37 methyltransferase</fullName>
    </alternativeName>
</protein>
<dbReference type="EC" id="2.1.1.223" evidence="1"/>
<dbReference type="EMBL" id="CP001233">
    <property type="protein sequence ID" value="ACP04942.1"/>
    <property type="molecule type" value="Genomic_DNA"/>
</dbReference>
<dbReference type="RefSeq" id="WP_000856169.1">
    <property type="nucleotide sequence ID" value="NC_012578.1"/>
</dbReference>
<dbReference type="SMR" id="C3LSR6"/>
<dbReference type="KEGG" id="vcm:VCM66_0619"/>
<dbReference type="HOGENOM" id="CLU_061983_0_0_6"/>
<dbReference type="Proteomes" id="UP000001217">
    <property type="component" value="Chromosome I"/>
</dbReference>
<dbReference type="GO" id="GO:0005737">
    <property type="term" value="C:cytoplasm"/>
    <property type="evidence" value="ECO:0007669"/>
    <property type="project" value="UniProtKB-SubCell"/>
</dbReference>
<dbReference type="GO" id="GO:0003676">
    <property type="term" value="F:nucleic acid binding"/>
    <property type="evidence" value="ECO:0007669"/>
    <property type="project" value="InterPro"/>
</dbReference>
<dbReference type="GO" id="GO:0016430">
    <property type="term" value="F:tRNA (adenine-N6)-methyltransferase activity"/>
    <property type="evidence" value="ECO:0007669"/>
    <property type="project" value="UniProtKB-UniRule"/>
</dbReference>
<dbReference type="GO" id="GO:0032259">
    <property type="term" value="P:methylation"/>
    <property type="evidence" value="ECO:0007669"/>
    <property type="project" value="UniProtKB-KW"/>
</dbReference>
<dbReference type="GO" id="GO:0008033">
    <property type="term" value="P:tRNA processing"/>
    <property type="evidence" value="ECO:0007669"/>
    <property type="project" value="UniProtKB-UniRule"/>
</dbReference>
<dbReference type="CDD" id="cd02440">
    <property type="entry name" value="AdoMet_MTases"/>
    <property type="match status" value="1"/>
</dbReference>
<dbReference type="Gene3D" id="3.40.50.150">
    <property type="entry name" value="Vaccinia Virus protein VP39"/>
    <property type="match status" value="1"/>
</dbReference>
<dbReference type="HAMAP" id="MF_01872">
    <property type="entry name" value="tRNA_methyltr_YfiC"/>
    <property type="match status" value="1"/>
</dbReference>
<dbReference type="InterPro" id="IPR002052">
    <property type="entry name" value="DNA_methylase_N6_adenine_CS"/>
</dbReference>
<dbReference type="InterPro" id="IPR029063">
    <property type="entry name" value="SAM-dependent_MTases_sf"/>
</dbReference>
<dbReference type="InterPro" id="IPR007848">
    <property type="entry name" value="Small_mtfrase_dom"/>
</dbReference>
<dbReference type="InterPro" id="IPR050210">
    <property type="entry name" value="tRNA_Adenine-N(6)_MTase"/>
</dbReference>
<dbReference type="InterPro" id="IPR022882">
    <property type="entry name" value="tRNA_adenine-N6_MeTrfase"/>
</dbReference>
<dbReference type="PANTHER" id="PTHR47739">
    <property type="entry name" value="TRNA1(VAL) (ADENINE(37)-N6)-METHYLTRANSFERASE"/>
    <property type="match status" value="1"/>
</dbReference>
<dbReference type="PANTHER" id="PTHR47739:SF1">
    <property type="entry name" value="TRNA1(VAL) (ADENINE(37)-N6)-METHYLTRANSFERASE"/>
    <property type="match status" value="1"/>
</dbReference>
<dbReference type="Pfam" id="PF05175">
    <property type="entry name" value="MTS"/>
    <property type="match status" value="1"/>
</dbReference>
<dbReference type="PRINTS" id="PR00507">
    <property type="entry name" value="N12N6MTFRASE"/>
</dbReference>
<dbReference type="SUPFAM" id="SSF53335">
    <property type="entry name" value="S-adenosyl-L-methionine-dependent methyltransferases"/>
    <property type="match status" value="1"/>
</dbReference>
<dbReference type="PROSITE" id="PS00092">
    <property type="entry name" value="N6_MTASE"/>
    <property type="match status" value="1"/>
</dbReference>
<reference key="1">
    <citation type="journal article" date="2008" name="PLoS ONE">
        <title>A recalibrated molecular clock and independent origins for the cholera pandemic clones.</title>
        <authorList>
            <person name="Feng L."/>
            <person name="Reeves P.R."/>
            <person name="Lan R."/>
            <person name="Ren Y."/>
            <person name="Gao C."/>
            <person name="Zhou Z."/>
            <person name="Ren Y."/>
            <person name="Cheng J."/>
            <person name="Wang W."/>
            <person name="Wang J."/>
            <person name="Qian W."/>
            <person name="Li D."/>
            <person name="Wang L."/>
        </authorList>
    </citation>
    <scope>NUCLEOTIDE SEQUENCE [LARGE SCALE GENOMIC DNA]</scope>
    <source>
        <strain>M66-2</strain>
    </source>
</reference>
<proteinExistence type="inferred from homology"/>
<organism>
    <name type="scientific">Vibrio cholerae serotype O1 (strain M66-2)</name>
    <dbReference type="NCBI Taxonomy" id="579112"/>
    <lineage>
        <taxon>Bacteria</taxon>
        <taxon>Pseudomonadati</taxon>
        <taxon>Pseudomonadota</taxon>
        <taxon>Gammaproteobacteria</taxon>
        <taxon>Vibrionales</taxon>
        <taxon>Vibrionaceae</taxon>
        <taxon>Vibrio</taxon>
    </lineage>
</organism>
<evidence type="ECO:0000255" key="1">
    <source>
        <dbReference type="HAMAP-Rule" id="MF_01872"/>
    </source>
</evidence>
<accession>C3LSR6</accession>
<gene>
    <name type="ordered locus">VCM66_0619</name>
</gene>
<name>TRMN6_VIBCM</name>
<feature type="chain" id="PRO_0000387442" description="tRNA1(Val) (adenine(37)-N6)-methyltransferase">
    <location>
        <begin position="1"/>
        <end position="240"/>
    </location>
</feature>
<comment type="function">
    <text evidence="1">Specifically methylates the adenine in position 37 of tRNA(1)(Val) (anticodon cmo5UAC).</text>
</comment>
<comment type="catalytic activity">
    <reaction evidence="1">
        <text>adenosine(37) in tRNA1(Val) + S-adenosyl-L-methionine = N(6)-methyladenosine(37) in tRNA1(Val) + S-adenosyl-L-homocysteine + H(+)</text>
        <dbReference type="Rhea" id="RHEA:43160"/>
        <dbReference type="Rhea" id="RHEA-COMP:10369"/>
        <dbReference type="Rhea" id="RHEA-COMP:10370"/>
        <dbReference type="ChEBI" id="CHEBI:15378"/>
        <dbReference type="ChEBI" id="CHEBI:57856"/>
        <dbReference type="ChEBI" id="CHEBI:59789"/>
        <dbReference type="ChEBI" id="CHEBI:74411"/>
        <dbReference type="ChEBI" id="CHEBI:74449"/>
        <dbReference type="EC" id="2.1.1.223"/>
    </reaction>
</comment>
<comment type="subcellular location">
    <subcellularLocation>
        <location evidence="1">Cytoplasm</location>
    </subcellularLocation>
</comment>
<comment type="similarity">
    <text evidence="1">Belongs to the methyltransferase superfamily. tRNA (adenine-N(6)-)-methyltransferase family.</text>
</comment>
<keyword id="KW-0963">Cytoplasm</keyword>
<keyword id="KW-0489">Methyltransferase</keyword>
<keyword id="KW-0949">S-adenosyl-L-methionine</keyword>
<keyword id="KW-0808">Transferase</keyword>
<keyword id="KW-0819">tRNA processing</keyword>